<sequence>MGISSKNGPKKMGRAKTFTGCWTCRGRKVKCDLRHPHCQRCEKSNLPCGGYDIKLRWSKPMQFDPYGVPIPQNSPATTTNLSGSVDEPQYQRRNIDFVRYDEEYVYHEDMDDELTMLHTPPIEKISDNKTWIIKKFGVFKGTDKIDKQYAPRKKRNRKRVAKSLESSASISLSSLPSSSTISFPIRHIEDKLRNKGHVKTGILSANDGVPPTPNLLDYDWNNLNITGYEWISSELRDDALLSAVTLQGHHLGHTQPQEISLEENSNVVSGEEHVNAKEHGCAFEADNQGSSTLPNKAASANDKLYQQNLKLLFQKNSSNSEEPDPQALIDDVFVNIEPRSLPASDLNKITLAPPNEESRMPKSMLELTSYSSDLPPELVDIIPKTDLTVHGLARFLLNHYFNNVADKMTVVVLEKNPWKTLYFPRALMALGDLAGLGQSSNSRNALLNALLAVSCFHLQSKYPRNYKLQKYFLGLGIELRNQASNFLRLCLNTKSSIPEKYKDVLTAILSMNSIDVVWGTMADCQDHLALCEDFVESRMKLRPNISEKTKTLHRIFSFLKLIQDSTALDKVRAKEIVILPSEEDDNYKPLDTSNATTSSSEPRVDVVQEGLFREALNENDGKIHIEFVKEPITNVSADSTPSSTTPPIFTNIATESYYNKSDISKLVSKTDENIIGTDSLYGLPNSLILLFSDCVRIVRHNEYYNLTYLPVPRKFNELSLNFEKRLLKWKSEWNFHQENSEGKSFINSTAEALYHHTMSFYFSLIIYYFTMARSLNCQFLQNYVAKVLDHLNAMEELVDQKKVKIVPLIWQGFMAGCACTDENRQQEFRRWAAKLAESGVGSYWGARQVMLEVWRRRKEDEPGDNWYSVYKDWEMNLMLS</sequence>
<proteinExistence type="evidence at protein level"/>
<organism>
    <name type="scientific">Saccharomyces cerevisiae (strain ATCC 204508 / S288c)</name>
    <name type="common">Baker's yeast</name>
    <dbReference type="NCBI Taxonomy" id="559292"/>
    <lineage>
        <taxon>Eukaryota</taxon>
        <taxon>Fungi</taxon>
        <taxon>Dikarya</taxon>
        <taxon>Ascomycota</taxon>
        <taxon>Saccharomycotina</taxon>
        <taxon>Saccharomycetes</taxon>
        <taxon>Saccharomycetales</taxon>
        <taxon>Saccharomycetaceae</taxon>
        <taxon>Saccharomyces</taxon>
    </lineage>
</organism>
<reference key="1">
    <citation type="journal article" date="1986" name="Eur. J. Biochem.">
        <title>Nucleotide sequence of the ARGRII regulatory gene and amino acid sequence homologies between ARGRII PPRI and GAL4 regulatory proteins.</title>
        <authorList>
            <person name="Messenguy F."/>
            <person name="Dubois E."/>
            <person name="Descamps F."/>
        </authorList>
    </citation>
    <scope>NUCLEOTIDE SEQUENCE [GENOMIC DNA]</scope>
</reference>
<reference key="2">
    <citation type="journal article" date="1997" name="Nature">
        <title>The nucleotide sequence of Saccharomyces cerevisiae chromosome XIII.</title>
        <authorList>
            <person name="Bowman S."/>
            <person name="Churcher C.M."/>
            <person name="Badcock K."/>
            <person name="Brown D."/>
            <person name="Chillingworth T."/>
            <person name="Connor R."/>
            <person name="Dedman K."/>
            <person name="Devlin K."/>
            <person name="Gentles S."/>
            <person name="Hamlin N."/>
            <person name="Hunt S."/>
            <person name="Jagels K."/>
            <person name="Lye G."/>
            <person name="Moule S."/>
            <person name="Odell C."/>
            <person name="Pearson D."/>
            <person name="Rajandream M.A."/>
            <person name="Rice P."/>
            <person name="Skelton J."/>
            <person name="Walsh S.V."/>
            <person name="Whitehead S."/>
            <person name="Barrell B.G."/>
        </authorList>
    </citation>
    <scope>NUCLEOTIDE SEQUENCE [LARGE SCALE GENOMIC DNA]</scope>
    <source>
        <strain>ATCC 204508 / S288c</strain>
    </source>
</reference>
<reference key="3">
    <citation type="journal article" date="2014" name="G3 (Bethesda)">
        <title>The reference genome sequence of Saccharomyces cerevisiae: Then and now.</title>
        <authorList>
            <person name="Engel S.R."/>
            <person name="Dietrich F.S."/>
            <person name="Fisk D.G."/>
            <person name="Binkley G."/>
            <person name="Balakrishnan R."/>
            <person name="Costanzo M.C."/>
            <person name="Dwight S.S."/>
            <person name="Hitz B.C."/>
            <person name="Karra K."/>
            <person name="Nash R.S."/>
            <person name="Weng S."/>
            <person name="Wong E.D."/>
            <person name="Lloyd P."/>
            <person name="Skrzypek M.S."/>
            <person name="Miyasato S.R."/>
            <person name="Simison M."/>
            <person name="Cherry J.M."/>
        </authorList>
    </citation>
    <scope>GENOME REANNOTATION</scope>
    <source>
        <strain>ATCC 204508 / S288c</strain>
    </source>
</reference>
<reference key="4">
    <citation type="journal article" date="1987" name="Gene">
        <title>Regulation of arginine metabolism in Saccharomyces cerevisiae: expression of the three ARGR regulatory genes and cellular localization of their products.</title>
        <authorList>
            <person name="Bercy J."/>
            <person name="Dubois E."/>
            <person name="Messenguy F."/>
        </authorList>
    </citation>
    <scope>SUBCELLULAR LOCATION</scope>
</reference>
<reference key="5">
    <citation type="journal article" date="1987" name="Mol. Gen. Genet.">
        <title>Characterization of two genes, ARGRI and ARGRIII required for specific regulation of arginine metabolism in yeast.</title>
        <authorList>
            <person name="Dubois E."/>
            <person name="Bercy J."/>
            <person name="Messenguy F."/>
        </authorList>
    </citation>
    <scope>FUNCTION</scope>
</reference>
<reference key="6">
    <citation type="journal article" date="1990" name="Mol. Gen. Genet.">
        <title>Functional analysis of ARGRI and ARGRIII regulatory proteins involved in the regulation of arginine metabolism in Saccharomyces cerevisiae.</title>
        <authorList>
            <person name="Qiu H.F."/>
            <person name="Dubois E."/>
            <person name="Broen P."/>
            <person name="Messenguy F."/>
        </authorList>
    </citation>
    <scope>FUNCTION</scope>
</reference>
<reference key="7">
    <citation type="journal article" date="1991" name="Mol. Cell. Biol.">
        <title>In vitro studies of the binding of the ARGR proteins to the ARG5,6 promoter.</title>
        <authorList>
            <person name="Dubois E."/>
            <person name="Messenguy F."/>
        </authorList>
    </citation>
    <scope>DNA-BINDING</scope>
</reference>
<reference key="8">
    <citation type="journal article" date="1991" name="Mol. Cell. Biol.">
        <title>Dissection of the bifunctional ARGRII protein involved in the regulation of arginine anabolic and catabolic pathways.</title>
        <authorList>
            <person name="Qui H.F."/>
            <person name="Dubois E."/>
            <person name="Messenguy F."/>
        </authorList>
    </citation>
    <scope>DNA-BINDING</scope>
</reference>
<reference key="9">
    <citation type="journal article" date="1991" name="Mol. Cell. Biol.">
        <title>Determination of the DNA-binding sequences of ARGR proteins to arginine anabolic and catabolic promoters.</title>
        <authorList>
            <person name="Messenguy F."/>
            <person name="Dubois E."/>
            <person name="Boonchird C."/>
        </authorList>
    </citation>
    <scope>DNA-BINDING</scope>
</reference>
<reference key="10">
    <citation type="journal article" date="2000" name="Mol. Microbiol.">
        <title>Recruitment of the yeast MADS-box proteins, ArgRI and Mcm1 by the pleiotropic factor ArgRIII is required for their stability.</title>
        <authorList>
            <person name="El Bakkoury M."/>
            <person name="Dubois E."/>
            <person name="Messenguy F."/>
        </authorList>
    </citation>
    <scope>INTERACTION WITH ARG80 AND MCM1</scope>
</reference>
<reference key="11">
    <citation type="journal article" date="2003" name="Nature">
        <title>Global analysis of protein localization in budding yeast.</title>
        <authorList>
            <person name="Huh W.-K."/>
            <person name="Falvo J.V."/>
            <person name="Gerke L.C."/>
            <person name="Carroll A.S."/>
            <person name="Howson R.W."/>
            <person name="Weissman J.S."/>
            <person name="O'Shea E.K."/>
        </authorList>
    </citation>
    <scope>SUBCELLULAR LOCATION [LARGE SCALE ANALYSIS]</scope>
</reference>
<reference key="12">
    <citation type="journal article" date="2008" name="Mol. Cell. Proteomics">
        <title>A multidimensional chromatography technology for in-depth phosphoproteome analysis.</title>
        <authorList>
            <person name="Albuquerque C.P."/>
            <person name="Smolka M.B."/>
            <person name="Payne S.H."/>
            <person name="Bafna V."/>
            <person name="Eng J."/>
            <person name="Zhou H."/>
        </authorList>
    </citation>
    <scope>IDENTIFICATION BY MASS SPECTROMETRY [LARGE SCALE ANALYSIS]</scope>
</reference>
<dbReference type="EMBL" id="X03940">
    <property type="protein sequence ID" value="CAA27577.1"/>
    <property type="molecule type" value="Genomic_DNA"/>
</dbReference>
<dbReference type="EMBL" id="Z46660">
    <property type="protein sequence ID" value="CAA86638.1"/>
    <property type="molecule type" value="Genomic_DNA"/>
</dbReference>
<dbReference type="EMBL" id="BK006946">
    <property type="protein sequence ID" value="DAA09800.1"/>
    <property type="molecule type" value="Genomic_DNA"/>
</dbReference>
<dbReference type="PIR" id="S49627">
    <property type="entry name" value="S49627"/>
</dbReference>
<dbReference type="RefSeq" id="NP_013610.1">
    <property type="nucleotide sequence ID" value="NM_001182459.1"/>
</dbReference>
<dbReference type="SMR" id="P05085"/>
<dbReference type="BioGRID" id="35044">
    <property type="interactions" value="86"/>
</dbReference>
<dbReference type="ComplexPortal" id="CPX-1152">
    <property type="entry name" value="ARGR-MCM1 transcription regulation complex"/>
</dbReference>
<dbReference type="DIP" id="DIP-1346N"/>
<dbReference type="FunCoup" id="P05085">
    <property type="interactions" value="421"/>
</dbReference>
<dbReference type="IntAct" id="P05085">
    <property type="interactions" value="15"/>
</dbReference>
<dbReference type="MINT" id="P05085"/>
<dbReference type="STRING" id="4932.YML099C"/>
<dbReference type="GlyGen" id="P05085">
    <property type="glycosylation" value="2 sites"/>
</dbReference>
<dbReference type="iPTMnet" id="P05085"/>
<dbReference type="PaxDb" id="4932-YML099C"/>
<dbReference type="PeptideAtlas" id="P05085"/>
<dbReference type="EnsemblFungi" id="YML099C_mRNA">
    <property type="protein sequence ID" value="YML099C"/>
    <property type="gene ID" value="YML099C"/>
</dbReference>
<dbReference type="GeneID" id="854874"/>
<dbReference type="KEGG" id="sce:YML099C"/>
<dbReference type="AGR" id="SGD:S000004565"/>
<dbReference type="SGD" id="S000004565">
    <property type="gene designation" value="ARG81"/>
</dbReference>
<dbReference type="VEuPathDB" id="FungiDB:YML099C"/>
<dbReference type="eggNOG" id="ENOG502QQBG">
    <property type="taxonomic scope" value="Eukaryota"/>
</dbReference>
<dbReference type="HOGENOM" id="CLU_009030_1_0_1"/>
<dbReference type="InParanoid" id="P05085"/>
<dbReference type="OMA" id="ARQIMFE"/>
<dbReference type="OrthoDB" id="3477330at2759"/>
<dbReference type="BioCyc" id="YEAST:G3O-32684-MONOMER"/>
<dbReference type="BioGRID-ORCS" id="854874">
    <property type="hits" value="4 hits in 10 CRISPR screens"/>
</dbReference>
<dbReference type="PRO" id="PR:P05085"/>
<dbReference type="Proteomes" id="UP000002311">
    <property type="component" value="Chromosome XIII"/>
</dbReference>
<dbReference type="RNAct" id="P05085">
    <property type="molecule type" value="protein"/>
</dbReference>
<dbReference type="GO" id="GO:0005737">
    <property type="term" value="C:cytoplasm"/>
    <property type="evidence" value="ECO:0007669"/>
    <property type="project" value="UniProtKB-SubCell"/>
</dbReference>
<dbReference type="GO" id="GO:0005634">
    <property type="term" value="C:nucleus"/>
    <property type="evidence" value="ECO:0000314"/>
    <property type="project" value="SGD"/>
</dbReference>
<dbReference type="GO" id="GO:0090575">
    <property type="term" value="C:RNA polymerase II transcription regulator complex"/>
    <property type="evidence" value="ECO:0000303"/>
    <property type="project" value="ComplexPortal"/>
</dbReference>
<dbReference type="GO" id="GO:0003677">
    <property type="term" value="F:DNA binding"/>
    <property type="evidence" value="ECO:0007669"/>
    <property type="project" value="UniProtKB-KW"/>
</dbReference>
<dbReference type="GO" id="GO:0000981">
    <property type="term" value="F:DNA-binding transcription factor activity, RNA polymerase II-specific"/>
    <property type="evidence" value="ECO:0007669"/>
    <property type="project" value="InterPro"/>
</dbReference>
<dbReference type="GO" id="GO:0003712">
    <property type="term" value="F:transcription coregulator activity"/>
    <property type="evidence" value="ECO:0000314"/>
    <property type="project" value="SGD"/>
</dbReference>
<dbReference type="GO" id="GO:0008270">
    <property type="term" value="F:zinc ion binding"/>
    <property type="evidence" value="ECO:0007669"/>
    <property type="project" value="InterPro"/>
</dbReference>
<dbReference type="GO" id="GO:0006525">
    <property type="term" value="P:arginine metabolic process"/>
    <property type="evidence" value="ECO:0007669"/>
    <property type="project" value="UniProtKB-KW"/>
</dbReference>
<dbReference type="GO" id="GO:0045944">
    <property type="term" value="P:positive regulation of transcription by RNA polymerase II"/>
    <property type="evidence" value="ECO:0000303"/>
    <property type="project" value="ComplexPortal"/>
</dbReference>
<dbReference type="GO" id="GO:0000821">
    <property type="term" value="P:regulation of arginine metabolic process"/>
    <property type="evidence" value="ECO:0000315"/>
    <property type="project" value="SGD"/>
</dbReference>
<dbReference type="CDD" id="cd00067">
    <property type="entry name" value="GAL4"/>
    <property type="match status" value="1"/>
</dbReference>
<dbReference type="FunFam" id="4.10.240.10:FF:000039">
    <property type="entry name" value="ARG81-like protein"/>
    <property type="match status" value="1"/>
</dbReference>
<dbReference type="Gene3D" id="4.10.240.10">
    <property type="entry name" value="Zn(2)-C6 fungal-type DNA-binding domain"/>
    <property type="match status" value="1"/>
</dbReference>
<dbReference type="InterPro" id="IPR021858">
    <property type="entry name" value="Fun_TF"/>
</dbReference>
<dbReference type="InterPro" id="IPR050675">
    <property type="entry name" value="OAF3"/>
</dbReference>
<dbReference type="InterPro" id="IPR036864">
    <property type="entry name" value="Zn2-C6_fun-type_DNA-bd_sf"/>
</dbReference>
<dbReference type="InterPro" id="IPR001138">
    <property type="entry name" value="Zn2Cys6_DnaBD"/>
</dbReference>
<dbReference type="PANTHER" id="PTHR31069:SF32">
    <property type="entry name" value="ARGININE METABOLISM REGULATION PROTEIN II"/>
    <property type="match status" value="1"/>
</dbReference>
<dbReference type="PANTHER" id="PTHR31069">
    <property type="entry name" value="OLEATE-ACTIVATED TRANSCRIPTION FACTOR 1-RELATED"/>
    <property type="match status" value="1"/>
</dbReference>
<dbReference type="Pfam" id="PF11951">
    <property type="entry name" value="Fungal_trans_2"/>
    <property type="match status" value="1"/>
</dbReference>
<dbReference type="Pfam" id="PF00172">
    <property type="entry name" value="Zn_clus"/>
    <property type="match status" value="1"/>
</dbReference>
<dbReference type="SMART" id="SM00066">
    <property type="entry name" value="GAL4"/>
    <property type="match status" value="1"/>
</dbReference>
<dbReference type="SUPFAM" id="SSF57701">
    <property type="entry name" value="Zn2/Cys6 DNA-binding domain"/>
    <property type="match status" value="1"/>
</dbReference>
<dbReference type="PROSITE" id="PS00463">
    <property type="entry name" value="ZN2_CY6_FUNGAL_1"/>
    <property type="match status" value="1"/>
</dbReference>
<dbReference type="PROSITE" id="PS50048">
    <property type="entry name" value="ZN2_CY6_FUNGAL_2"/>
    <property type="match status" value="1"/>
</dbReference>
<protein>
    <recommendedName>
        <fullName>Arginine metabolism regulation protein II</fullName>
    </recommendedName>
    <alternativeName>
        <fullName>Arginine-requiring protein 81</fullName>
    </alternativeName>
</protein>
<evidence type="ECO:0000255" key="1">
    <source>
        <dbReference type="PROSITE-ProRule" id="PRU00227"/>
    </source>
</evidence>
<evidence type="ECO:0000269" key="2">
    <source>
    </source>
</evidence>
<evidence type="ECO:0000269" key="3">
    <source>
    </source>
</evidence>
<evidence type="ECO:0000269" key="4">
    <source>
    </source>
</evidence>
<evidence type="ECO:0000305" key="5"/>
<gene>
    <name type="primary">ARG81</name>
    <name type="synonym">ARGR2</name>
    <name type="ordered locus">YML099C</name>
</gene>
<accession>P05085</accession>
<accession>D6W0I6</accession>
<keyword id="KW-0010">Activator</keyword>
<keyword id="KW-0056">Arginine metabolism</keyword>
<keyword id="KW-0963">Cytoplasm</keyword>
<keyword id="KW-0238">DNA-binding</keyword>
<keyword id="KW-0479">Metal-binding</keyword>
<keyword id="KW-0539">Nucleus</keyword>
<keyword id="KW-1185">Reference proteome</keyword>
<keyword id="KW-0804">Transcription</keyword>
<keyword id="KW-0805">Transcription regulation</keyword>
<keyword id="KW-0862">Zinc</keyword>
<comment type="function">
    <text evidence="3 4">With ARG80, ARG82 and MCM1, coordinates the expression of arginine anabolic and catabolic genes in response to arginine.</text>
</comment>
<comment type="subunit">
    <text evidence="2">Interacts with ARG80 and MCM1.</text>
</comment>
<comment type="subcellular location">
    <subcellularLocation>
        <location>Cytoplasm</location>
    </subcellularLocation>
    <subcellularLocation>
        <location>Nucleus</location>
    </subcellularLocation>
</comment>
<name>ARGR2_YEAST</name>
<feature type="chain" id="PRO_0000114937" description="Arginine metabolism regulation protein II">
    <location>
        <begin position="1"/>
        <end position="880"/>
    </location>
</feature>
<feature type="DNA-binding region" description="Zn(2)-C6 fungal-type" evidence="1">
    <location>
        <begin position="21"/>
        <end position="48"/>
    </location>
</feature>
<feature type="sequence conflict" description="In Ref. 1; CAA27577." evidence="5" ref="1">
    <original>S</original>
    <variation>F</variation>
    <location>
        <position position="4"/>
    </location>
</feature>
<feature type="sequence conflict" description="In Ref. 1; CAA27577." evidence="5" ref="1">
    <location>
        <position position="129"/>
    </location>
</feature>
<feature type="sequence conflict" description="In Ref. 1; CAA27577." evidence="5" ref="1">
    <original>F</original>
    <variation>V</variation>
    <location>
        <position position="283"/>
    </location>
</feature>
<feature type="sequence conflict" description="In Ref. 1; CAA27577." evidence="5" ref="1">
    <original>D</original>
    <variation>V</variation>
    <location>
        <position position="345"/>
    </location>
</feature>
<feature type="sequence conflict" description="In Ref. 1; CAA27577." evidence="5" ref="1">
    <original>E</original>
    <variation>Q</variation>
    <location>
        <position position="366"/>
    </location>
</feature>
<feature type="sequence conflict" description="In Ref. 1; CAA27577." evidence="5" ref="1">
    <original>T</original>
    <variation>A</variation>
    <location>
        <position position="549"/>
    </location>
</feature>
<feature type="sequence conflict" description="In Ref. 1; CAA27577." evidence="5" ref="1">
    <original>T</original>
    <variation>S</variation>
    <location>
        <position position="597"/>
    </location>
</feature>
<feature type="sequence conflict" description="In Ref. 1; CAA27577." evidence="5" ref="1">
    <original>K</original>
    <variation>N</variation>
    <location>
        <position position="665"/>
    </location>
</feature>
<feature type="sequence conflict" description="In Ref. 1; CAA27577." evidence="5" ref="1">
    <original>V</original>
    <variation>I</variation>
    <location>
        <position position="869"/>
    </location>
</feature>